<accession>Q5WEY9</accession>
<name>Y2536_SHOC1</name>
<proteinExistence type="inferred from homology"/>
<reference key="1">
    <citation type="submission" date="2003-10" db="EMBL/GenBank/DDBJ databases">
        <title>The complete genome sequence of the alkaliphilic Bacillus clausii KSM-K16.</title>
        <authorList>
            <person name="Takaki Y."/>
            <person name="Kageyama Y."/>
            <person name="Shimamura S."/>
            <person name="Suzuki H."/>
            <person name="Nishi S."/>
            <person name="Hatada Y."/>
            <person name="Kawai S."/>
            <person name="Ito S."/>
            <person name="Horikoshi K."/>
        </authorList>
    </citation>
    <scope>NUCLEOTIDE SEQUENCE [LARGE SCALE GENOMIC DNA]</scope>
    <source>
        <strain>KSM-K16</strain>
    </source>
</reference>
<sequence length="248" mass="29606">MVMMRDVWVNWFEGEENGYNVCPFHEWRSEDRIEVLDQVKLLKVDEKLMDYIEDQLLDLPMELLKEVFQKSYLRKNMSRIQLDYCFIATDGKRIIAVDTMGYKTPIRKSRLTPRQEQVVFETLTEQDVPYFQLEIPLPAKDYHLLSPSPAELAGLTRKERQLKQLLLMVLDQLQTTGSDAEIKYWCTEWDPLTYKKLQQKGRTEVWEQLLNGVRAGWSQRHYKLCEAMVKGHSFFEKLWELEHPERVK</sequence>
<comment type="similarity">
    <text evidence="1">Belongs to the UPF0736 family.</text>
</comment>
<evidence type="ECO:0000255" key="1">
    <source>
        <dbReference type="HAMAP-Rule" id="MF_01860"/>
    </source>
</evidence>
<dbReference type="EMBL" id="AP006627">
    <property type="protein sequence ID" value="BAD65071.1"/>
    <property type="molecule type" value="Genomic_DNA"/>
</dbReference>
<dbReference type="RefSeq" id="WP_011247379.1">
    <property type="nucleotide sequence ID" value="NC_006582.1"/>
</dbReference>
<dbReference type="SMR" id="Q5WEY9"/>
<dbReference type="STRING" id="66692.ABC2536"/>
<dbReference type="KEGG" id="bcl:ABC2536"/>
<dbReference type="eggNOG" id="ENOG502Z8PJ">
    <property type="taxonomic scope" value="Bacteria"/>
</dbReference>
<dbReference type="HOGENOM" id="CLU_1101152_0_0_9"/>
<dbReference type="OrthoDB" id="2960746at2"/>
<dbReference type="Proteomes" id="UP000001168">
    <property type="component" value="Chromosome"/>
</dbReference>
<dbReference type="HAMAP" id="MF_01860">
    <property type="entry name" value="UPF0736"/>
    <property type="match status" value="1"/>
</dbReference>
<dbReference type="InterPro" id="IPR020909">
    <property type="entry name" value="UPF0736"/>
</dbReference>
<dbReference type="Pfam" id="PF12227">
    <property type="entry name" value="DUF3603"/>
    <property type="match status" value="1"/>
</dbReference>
<organism>
    <name type="scientific">Shouchella clausii (strain KSM-K16)</name>
    <name type="common">Alkalihalobacillus clausii</name>
    <dbReference type="NCBI Taxonomy" id="66692"/>
    <lineage>
        <taxon>Bacteria</taxon>
        <taxon>Bacillati</taxon>
        <taxon>Bacillota</taxon>
        <taxon>Bacilli</taxon>
        <taxon>Bacillales</taxon>
        <taxon>Bacillaceae</taxon>
        <taxon>Shouchella</taxon>
    </lineage>
</organism>
<gene>
    <name type="ordered locus">ABC2536</name>
</gene>
<keyword id="KW-1185">Reference proteome</keyword>
<feature type="chain" id="PRO_0000369143" description="UPF0736 protein ABC2536">
    <location>
        <begin position="1"/>
        <end position="248"/>
    </location>
</feature>
<protein>
    <recommendedName>
        <fullName evidence="1">UPF0736 protein ABC2536</fullName>
    </recommendedName>
</protein>